<evidence type="ECO:0000255" key="1">
    <source>
        <dbReference type="HAMAP-Rule" id="MF_01571"/>
    </source>
</evidence>
<accession>Q6KZA3</accession>
<comment type="function">
    <text evidence="1">Catalyzes the attachment of proline to tRNA(Pro) in a two-step reaction: proline is first activated by ATP to form Pro-AMP and then transferred to the acceptor end of tRNA(Pro).</text>
</comment>
<comment type="catalytic activity">
    <reaction evidence="1">
        <text>tRNA(Pro) + L-proline + ATP = L-prolyl-tRNA(Pro) + AMP + diphosphate</text>
        <dbReference type="Rhea" id="RHEA:14305"/>
        <dbReference type="Rhea" id="RHEA-COMP:9700"/>
        <dbReference type="Rhea" id="RHEA-COMP:9702"/>
        <dbReference type="ChEBI" id="CHEBI:30616"/>
        <dbReference type="ChEBI" id="CHEBI:33019"/>
        <dbReference type="ChEBI" id="CHEBI:60039"/>
        <dbReference type="ChEBI" id="CHEBI:78442"/>
        <dbReference type="ChEBI" id="CHEBI:78532"/>
        <dbReference type="ChEBI" id="CHEBI:456215"/>
        <dbReference type="EC" id="6.1.1.15"/>
    </reaction>
</comment>
<comment type="subunit">
    <text evidence="1">Homodimer.</text>
</comment>
<comment type="subcellular location">
    <subcellularLocation>
        <location evidence="1">Cytoplasm</location>
    </subcellularLocation>
</comment>
<comment type="domain">
    <text evidence="1">Consists of three domains: the N-terminal catalytic domain, the anticodon-binding domain and the C-terminal extension.</text>
</comment>
<comment type="similarity">
    <text evidence="1">Belongs to the class-II aminoacyl-tRNA synthetase family. ProS type 3 subfamily.</text>
</comment>
<protein>
    <recommendedName>
        <fullName evidence="1">Proline--tRNA ligase</fullName>
        <ecNumber evidence="1">6.1.1.15</ecNumber>
    </recommendedName>
    <alternativeName>
        <fullName evidence="1">Prolyl-tRNA synthetase</fullName>
        <shortName evidence="1">ProRS</shortName>
    </alternativeName>
</protein>
<proteinExistence type="inferred from homology"/>
<reference key="1">
    <citation type="journal article" date="2004" name="Proc. Natl. Acad. Sci. U.S.A.">
        <title>Genome sequence of Picrophilus torridus and its implications for life around pH 0.</title>
        <authorList>
            <person name="Fuetterer O."/>
            <person name="Angelov A."/>
            <person name="Liesegang H."/>
            <person name="Gottschalk G."/>
            <person name="Schleper C."/>
            <person name="Schepers B."/>
            <person name="Dock C."/>
            <person name="Antranikian G."/>
            <person name="Liebl W."/>
        </authorList>
    </citation>
    <scope>NUCLEOTIDE SEQUENCE [LARGE SCALE GENOMIC DNA]</scope>
    <source>
        <strain>ATCC 700027 / DSM 9790 / JCM 10055 / NBRC 100828 / KAW 2/3</strain>
    </source>
</reference>
<gene>
    <name evidence="1" type="primary">proS</name>
    <name type="ordered locus">PTO1364</name>
</gene>
<sequence length="466" mass="53916">MENKKENFSEWYNEIIDLAKLSDKRYAIKGMNVWLPYGLKIMRLIDNIIRDNVDNKSFQEVSFPVLITRSQLETEFEHIKGFENEIYWVTKGGSEKLDIELALRPTSESAMYTMFPLWIRSHQDLPLKIYQIVSVYRYETKHTRSFIRVREIHFFEAHTAHVDYGDAERQMSEYMDIWSSIAEKLCLPYNIDMRPDWDKFPGAKYTLAFDTLMPSGRSLQIGTIHEYGENFARNYDIKYLDINGDLKYVSQTTFGLSERLLAAVIGIHGDDTGLILPASIAPVQAIIIPIPGKSFKEVLDYSGKILSMLKDINVRAEIDSRENYTPGYKYNDWEMRGVPLRIEIGSREMESSTVTVVSRLNKKRLNISIKEINNIKNMLNEHDKQLTLNAWKMMEENTVFIDDINNIPMNKDVLIKAYWCGSRECSDALEQKKDVTALGTLYNLNDSGKCIVCGNPGRLSMFARSY</sequence>
<feature type="chain" id="PRO_0000249167" description="Proline--tRNA ligase">
    <location>
        <begin position="1"/>
        <end position="466"/>
    </location>
</feature>
<dbReference type="EC" id="6.1.1.15" evidence="1"/>
<dbReference type="EMBL" id="AE017261">
    <property type="protein sequence ID" value="AAT43949.1"/>
    <property type="molecule type" value="Genomic_DNA"/>
</dbReference>
<dbReference type="RefSeq" id="WP_011178165.1">
    <property type="nucleotide sequence ID" value="NC_005877.1"/>
</dbReference>
<dbReference type="SMR" id="Q6KZA3"/>
<dbReference type="FunCoup" id="Q6KZA3">
    <property type="interactions" value="120"/>
</dbReference>
<dbReference type="STRING" id="263820.PTO1364"/>
<dbReference type="PaxDb" id="263820-PTO1364"/>
<dbReference type="GeneID" id="2845069"/>
<dbReference type="KEGG" id="pto:PTO1364"/>
<dbReference type="PATRIC" id="fig|263820.9.peg.1418"/>
<dbReference type="eggNOG" id="arCOG00402">
    <property type="taxonomic scope" value="Archaea"/>
</dbReference>
<dbReference type="HOGENOM" id="CLU_001882_4_2_2"/>
<dbReference type="InParanoid" id="Q6KZA3"/>
<dbReference type="OrthoDB" id="7375at2157"/>
<dbReference type="Proteomes" id="UP000000438">
    <property type="component" value="Chromosome"/>
</dbReference>
<dbReference type="GO" id="GO:0017101">
    <property type="term" value="C:aminoacyl-tRNA synthetase multienzyme complex"/>
    <property type="evidence" value="ECO:0007669"/>
    <property type="project" value="TreeGrafter"/>
</dbReference>
<dbReference type="GO" id="GO:0005737">
    <property type="term" value="C:cytoplasm"/>
    <property type="evidence" value="ECO:0007669"/>
    <property type="project" value="UniProtKB-SubCell"/>
</dbReference>
<dbReference type="GO" id="GO:0005524">
    <property type="term" value="F:ATP binding"/>
    <property type="evidence" value="ECO:0007669"/>
    <property type="project" value="UniProtKB-UniRule"/>
</dbReference>
<dbReference type="GO" id="GO:0004827">
    <property type="term" value="F:proline-tRNA ligase activity"/>
    <property type="evidence" value="ECO:0007669"/>
    <property type="project" value="UniProtKB-UniRule"/>
</dbReference>
<dbReference type="GO" id="GO:0006433">
    <property type="term" value="P:prolyl-tRNA aminoacylation"/>
    <property type="evidence" value="ECO:0007669"/>
    <property type="project" value="UniProtKB-UniRule"/>
</dbReference>
<dbReference type="CDD" id="cd00778">
    <property type="entry name" value="ProRS_core_arch_euk"/>
    <property type="match status" value="1"/>
</dbReference>
<dbReference type="FunFam" id="3.30.930.10:FF:000037">
    <property type="entry name" value="Proline--tRNA ligase"/>
    <property type="match status" value="1"/>
</dbReference>
<dbReference type="Gene3D" id="3.40.50.800">
    <property type="entry name" value="Anticodon-binding domain"/>
    <property type="match status" value="1"/>
</dbReference>
<dbReference type="Gene3D" id="3.30.930.10">
    <property type="entry name" value="Bira Bifunctional Protein, Domain 2"/>
    <property type="match status" value="1"/>
</dbReference>
<dbReference type="Gene3D" id="3.30.110.30">
    <property type="entry name" value="C-terminal domain of ProRS"/>
    <property type="match status" value="1"/>
</dbReference>
<dbReference type="HAMAP" id="MF_01571">
    <property type="entry name" value="Pro_tRNA_synth_type3"/>
    <property type="match status" value="1"/>
</dbReference>
<dbReference type="InterPro" id="IPR002314">
    <property type="entry name" value="aa-tRNA-synt_IIb"/>
</dbReference>
<dbReference type="InterPro" id="IPR006195">
    <property type="entry name" value="aa-tRNA-synth_II"/>
</dbReference>
<dbReference type="InterPro" id="IPR045864">
    <property type="entry name" value="aa-tRNA-synth_II/BPL/LPL"/>
</dbReference>
<dbReference type="InterPro" id="IPR004154">
    <property type="entry name" value="Anticodon-bd"/>
</dbReference>
<dbReference type="InterPro" id="IPR036621">
    <property type="entry name" value="Anticodon-bd_dom_sf"/>
</dbReference>
<dbReference type="InterPro" id="IPR002316">
    <property type="entry name" value="Pro-tRNA-ligase_IIa"/>
</dbReference>
<dbReference type="InterPro" id="IPR004499">
    <property type="entry name" value="Pro-tRNA-ligase_IIa_arc-type"/>
</dbReference>
<dbReference type="InterPro" id="IPR016061">
    <property type="entry name" value="Pro-tRNA_ligase_II_C"/>
</dbReference>
<dbReference type="InterPro" id="IPR017449">
    <property type="entry name" value="Pro-tRNA_synth_II"/>
</dbReference>
<dbReference type="InterPro" id="IPR033721">
    <property type="entry name" value="ProRS_core_arch_euk"/>
</dbReference>
<dbReference type="NCBIfam" id="TIGR00408">
    <property type="entry name" value="proS_fam_I"/>
    <property type="match status" value="1"/>
</dbReference>
<dbReference type="PANTHER" id="PTHR43382:SF2">
    <property type="entry name" value="BIFUNCTIONAL GLUTAMATE_PROLINE--TRNA LIGASE"/>
    <property type="match status" value="1"/>
</dbReference>
<dbReference type="PANTHER" id="PTHR43382">
    <property type="entry name" value="PROLYL-TRNA SYNTHETASE"/>
    <property type="match status" value="1"/>
</dbReference>
<dbReference type="Pfam" id="PF03129">
    <property type="entry name" value="HGTP_anticodon"/>
    <property type="match status" value="1"/>
</dbReference>
<dbReference type="Pfam" id="PF09180">
    <property type="entry name" value="ProRS-C_1"/>
    <property type="match status" value="1"/>
</dbReference>
<dbReference type="Pfam" id="PF00587">
    <property type="entry name" value="tRNA-synt_2b"/>
    <property type="match status" value="1"/>
</dbReference>
<dbReference type="PRINTS" id="PR01046">
    <property type="entry name" value="TRNASYNTHPRO"/>
</dbReference>
<dbReference type="SMART" id="SM00946">
    <property type="entry name" value="ProRS-C_1"/>
    <property type="match status" value="1"/>
</dbReference>
<dbReference type="SUPFAM" id="SSF64586">
    <property type="entry name" value="C-terminal domain of ProRS"/>
    <property type="match status" value="1"/>
</dbReference>
<dbReference type="SUPFAM" id="SSF52954">
    <property type="entry name" value="Class II aaRS ABD-related"/>
    <property type="match status" value="1"/>
</dbReference>
<dbReference type="SUPFAM" id="SSF55681">
    <property type="entry name" value="Class II aaRS and biotin synthetases"/>
    <property type="match status" value="1"/>
</dbReference>
<dbReference type="PROSITE" id="PS50862">
    <property type="entry name" value="AA_TRNA_LIGASE_II"/>
    <property type="match status" value="1"/>
</dbReference>
<keyword id="KW-0030">Aminoacyl-tRNA synthetase</keyword>
<keyword id="KW-0067">ATP-binding</keyword>
<keyword id="KW-0963">Cytoplasm</keyword>
<keyword id="KW-0436">Ligase</keyword>
<keyword id="KW-0547">Nucleotide-binding</keyword>
<keyword id="KW-0648">Protein biosynthesis</keyword>
<name>SYP_PICTO</name>
<organism>
    <name type="scientific">Picrophilus torridus (strain ATCC 700027 / DSM 9790 / JCM 10055 / NBRC 100828 / KAW 2/3)</name>
    <dbReference type="NCBI Taxonomy" id="1122961"/>
    <lineage>
        <taxon>Archaea</taxon>
        <taxon>Methanobacteriati</taxon>
        <taxon>Thermoplasmatota</taxon>
        <taxon>Thermoplasmata</taxon>
        <taxon>Thermoplasmatales</taxon>
        <taxon>Picrophilaceae</taxon>
        <taxon>Picrophilus</taxon>
    </lineage>
</organism>